<proteinExistence type="inferred from homology"/>
<reference key="1">
    <citation type="journal article" date="2003" name="Proc. Natl. Acad. Sci. U.S.A.">
        <title>Complete genome sequence of the marine planctomycete Pirellula sp. strain 1.</title>
        <authorList>
            <person name="Gloeckner F.O."/>
            <person name="Kube M."/>
            <person name="Bauer M."/>
            <person name="Teeling H."/>
            <person name="Lombardot T."/>
            <person name="Ludwig W."/>
            <person name="Gade D."/>
            <person name="Beck A."/>
            <person name="Borzym K."/>
            <person name="Heitmann K."/>
            <person name="Rabus R."/>
            <person name="Schlesner H."/>
            <person name="Amann R."/>
            <person name="Reinhardt R."/>
        </authorList>
    </citation>
    <scope>NUCLEOTIDE SEQUENCE [LARGE SCALE GENOMIC DNA]</scope>
    <source>
        <strain>DSM 10527 / NCIMB 13988 / SH1</strain>
    </source>
</reference>
<keyword id="KW-0012">Acyltransferase</keyword>
<keyword id="KW-0963">Cytoplasm</keyword>
<keyword id="KW-0408">Iron</keyword>
<keyword id="KW-0479">Metal-binding</keyword>
<keyword id="KW-1185">Reference proteome</keyword>
<keyword id="KW-0808">Transferase</keyword>
<keyword id="KW-0819">tRNA processing</keyword>
<accession>Q7UM42</accession>
<sequence>MTPTAASELLLSIESTCDETAAAVIRRDGTVLGQCIATQETLHEQFGGVVPEIAARAHLERILPVIDTALTQAKVRGEDLTAIAVADRPGLAGSLLVGVVAAKTLALAWNKPLISLNHLHAHLYACQLIEGAPANIYPAIGLIVSGGHTSLYVCRTAIDLEYLGGTIDDAAGEAFDKVAAMLSLPFPGGIEVAKLASQGNDKAYSFPRSMIHDPGDDFSFSGLKTAVRYAIVGPGRQDFASLDISDQVKRDVCASFEAAVVDVLVSKCRRAIKRHRNRNNDPQNSINRLIVGGGVAANQRLRRDLQAAADKDGFELWIAPPHLCTDNAVMGAIAWKKFEAEQFASLDLDITPGLQRGF</sequence>
<comment type="function">
    <text evidence="1">Required for the formation of a threonylcarbamoyl group on adenosine at position 37 (t(6)A37) in tRNAs that read codons beginning with adenine. Is involved in the transfer of the threonylcarbamoyl moiety of threonylcarbamoyl-AMP (TC-AMP) to the N6 group of A37, together with TsaE and TsaB. TsaD likely plays a direct catalytic role in this reaction.</text>
</comment>
<comment type="catalytic activity">
    <reaction evidence="1">
        <text>L-threonylcarbamoyladenylate + adenosine(37) in tRNA = N(6)-L-threonylcarbamoyladenosine(37) in tRNA + AMP + H(+)</text>
        <dbReference type="Rhea" id="RHEA:37059"/>
        <dbReference type="Rhea" id="RHEA-COMP:10162"/>
        <dbReference type="Rhea" id="RHEA-COMP:10163"/>
        <dbReference type="ChEBI" id="CHEBI:15378"/>
        <dbReference type="ChEBI" id="CHEBI:73682"/>
        <dbReference type="ChEBI" id="CHEBI:74411"/>
        <dbReference type="ChEBI" id="CHEBI:74418"/>
        <dbReference type="ChEBI" id="CHEBI:456215"/>
        <dbReference type="EC" id="2.3.1.234"/>
    </reaction>
</comment>
<comment type="cofactor">
    <cofactor evidence="1">
        <name>Fe(2+)</name>
        <dbReference type="ChEBI" id="CHEBI:29033"/>
    </cofactor>
    <text evidence="1">Binds 1 Fe(2+) ion per subunit.</text>
</comment>
<comment type="subcellular location">
    <subcellularLocation>
        <location evidence="1">Cytoplasm</location>
    </subcellularLocation>
</comment>
<comment type="similarity">
    <text evidence="1">Belongs to the KAE1 / TsaD family.</text>
</comment>
<organism>
    <name type="scientific">Rhodopirellula baltica (strain DSM 10527 / NCIMB 13988 / SH1)</name>
    <dbReference type="NCBI Taxonomy" id="243090"/>
    <lineage>
        <taxon>Bacteria</taxon>
        <taxon>Pseudomonadati</taxon>
        <taxon>Planctomycetota</taxon>
        <taxon>Planctomycetia</taxon>
        <taxon>Pirellulales</taxon>
        <taxon>Pirellulaceae</taxon>
        <taxon>Rhodopirellula</taxon>
    </lineage>
</organism>
<dbReference type="EC" id="2.3.1.234" evidence="1"/>
<dbReference type="EMBL" id="BX294148">
    <property type="protein sequence ID" value="CAD76075.1"/>
    <property type="molecule type" value="Genomic_DNA"/>
</dbReference>
<dbReference type="RefSeq" id="NP_868698.1">
    <property type="nucleotide sequence ID" value="NC_005027.1"/>
</dbReference>
<dbReference type="RefSeq" id="WP_007338414.1">
    <property type="nucleotide sequence ID" value="NC_005027.1"/>
</dbReference>
<dbReference type="SMR" id="Q7UM42"/>
<dbReference type="FunCoup" id="Q7UM42">
    <property type="interactions" value="532"/>
</dbReference>
<dbReference type="STRING" id="243090.RB9084"/>
<dbReference type="EnsemblBacteria" id="CAD76075">
    <property type="protein sequence ID" value="CAD76075"/>
    <property type="gene ID" value="RB9084"/>
</dbReference>
<dbReference type="KEGG" id="rba:RB9084"/>
<dbReference type="PATRIC" id="fig|243090.15.peg.4352"/>
<dbReference type="eggNOG" id="COG0533">
    <property type="taxonomic scope" value="Bacteria"/>
</dbReference>
<dbReference type="HOGENOM" id="CLU_023208_0_2_0"/>
<dbReference type="InParanoid" id="Q7UM42"/>
<dbReference type="OrthoDB" id="9806197at2"/>
<dbReference type="Proteomes" id="UP000001025">
    <property type="component" value="Chromosome"/>
</dbReference>
<dbReference type="GO" id="GO:0005737">
    <property type="term" value="C:cytoplasm"/>
    <property type="evidence" value="ECO:0007669"/>
    <property type="project" value="UniProtKB-SubCell"/>
</dbReference>
<dbReference type="GO" id="GO:0005506">
    <property type="term" value="F:iron ion binding"/>
    <property type="evidence" value="ECO:0007669"/>
    <property type="project" value="UniProtKB-UniRule"/>
</dbReference>
<dbReference type="GO" id="GO:0061711">
    <property type="term" value="F:N(6)-L-threonylcarbamoyladenine synthase activity"/>
    <property type="evidence" value="ECO:0007669"/>
    <property type="project" value="UniProtKB-EC"/>
</dbReference>
<dbReference type="GO" id="GO:0002949">
    <property type="term" value="P:tRNA threonylcarbamoyladenosine modification"/>
    <property type="evidence" value="ECO:0007669"/>
    <property type="project" value="UniProtKB-UniRule"/>
</dbReference>
<dbReference type="CDD" id="cd24133">
    <property type="entry name" value="ASKHA_NBD_TsaD_bac"/>
    <property type="match status" value="1"/>
</dbReference>
<dbReference type="FunFam" id="3.30.420.40:FF:000012">
    <property type="entry name" value="tRNA N6-adenosine threonylcarbamoyltransferase"/>
    <property type="match status" value="1"/>
</dbReference>
<dbReference type="FunFam" id="3.30.420.40:FF:000040">
    <property type="entry name" value="tRNA N6-adenosine threonylcarbamoyltransferase"/>
    <property type="match status" value="1"/>
</dbReference>
<dbReference type="Gene3D" id="3.30.420.40">
    <property type="match status" value="2"/>
</dbReference>
<dbReference type="HAMAP" id="MF_01445">
    <property type="entry name" value="TsaD"/>
    <property type="match status" value="1"/>
</dbReference>
<dbReference type="InterPro" id="IPR043129">
    <property type="entry name" value="ATPase_NBD"/>
</dbReference>
<dbReference type="InterPro" id="IPR000905">
    <property type="entry name" value="Gcp-like_dom"/>
</dbReference>
<dbReference type="InterPro" id="IPR017861">
    <property type="entry name" value="KAE1/TsaD"/>
</dbReference>
<dbReference type="InterPro" id="IPR017860">
    <property type="entry name" value="Peptidase_M22_CS"/>
</dbReference>
<dbReference type="InterPro" id="IPR022450">
    <property type="entry name" value="TsaD"/>
</dbReference>
<dbReference type="NCBIfam" id="TIGR00329">
    <property type="entry name" value="gcp_kae1"/>
    <property type="match status" value="1"/>
</dbReference>
<dbReference type="NCBIfam" id="TIGR03723">
    <property type="entry name" value="T6A_TsaD_YgjD"/>
    <property type="match status" value="1"/>
</dbReference>
<dbReference type="PANTHER" id="PTHR11735">
    <property type="entry name" value="TRNA N6-ADENOSINE THREONYLCARBAMOYLTRANSFERASE"/>
    <property type="match status" value="1"/>
</dbReference>
<dbReference type="PANTHER" id="PTHR11735:SF6">
    <property type="entry name" value="TRNA N6-ADENOSINE THREONYLCARBAMOYLTRANSFERASE, MITOCHONDRIAL"/>
    <property type="match status" value="1"/>
</dbReference>
<dbReference type="Pfam" id="PF00814">
    <property type="entry name" value="TsaD"/>
    <property type="match status" value="1"/>
</dbReference>
<dbReference type="PRINTS" id="PR00789">
    <property type="entry name" value="OSIALOPTASE"/>
</dbReference>
<dbReference type="SUPFAM" id="SSF53067">
    <property type="entry name" value="Actin-like ATPase domain"/>
    <property type="match status" value="2"/>
</dbReference>
<dbReference type="PROSITE" id="PS01016">
    <property type="entry name" value="GLYCOPROTEASE"/>
    <property type="match status" value="1"/>
</dbReference>
<name>TSAD_RHOBA</name>
<gene>
    <name evidence="1" type="primary">tsaD</name>
    <name type="synonym">gcp</name>
    <name type="ordered locus">RB9084</name>
</gene>
<evidence type="ECO:0000255" key="1">
    <source>
        <dbReference type="HAMAP-Rule" id="MF_01445"/>
    </source>
</evidence>
<feature type="chain" id="PRO_0000303515" description="tRNA N6-adenosine threonylcarbamoyltransferase">
    <location>
        <begin position="1"/>
        <end position="358"/>
    </location>
</feature>
<feature type="binding site" evidence="1">
    <location>
        <position position="118"/>
    </location>
    <ligand>
        <name>Fe cation</name>
        <dbReference type="ChEBI" id="CHEBI:24875"/>
    </ligand>
</feature>
<feature type="binding site" evidence="1">
    <location>
        <position position="122"/>
    </location>
    <ligand>
        <name>Fe cation</name>
        <dbReference type="ChEBI" id="CHEBI:24875"/>
    </ligand>
</feature>
<feature type="binding site" evidence="1">
    <location>
        <begin position="143"/>
        <end position="147"/>
    </location>
    <ligand>
        <name>substrate</name>
    </ligand>
</feature>
<feature type="binding site" evidence="1">
    <location>
        <position position="176"/>
    </location>
    <ligand>
        <name>substrate</name>
    </ligand>
</feature>
<feature type="binding site" evidence="1">
    <location>
        <position position="189"/>
    </location>
    <ligand>
        <name>substrate</name>
    </ligand>
</feature>
<feature type="binding site" evidence="1">
    <location>
        <position position="298"/>
    </location>
    <ligand>
        <name>substrate</name>
    </ligand>
</feature>
<feature type="binding site" evidence="1">
    <location>
        <position position="326"/>
    </location>
    <ligand>
        <name>Fe cation</name>
        <dbReference type="ChEBI" id="CHEBI:24875"/>
    </ligand>
</feature>
<protein>
    <recommendedName>
        <fullName evidence="1">tRNA N6-adenosine threonylcarbamoyltransferase</fullName>
        <ecNumber evidence="1">2.3.1.234</ecNumber>
    </recommendedName>
    <alternativeName>
        <fullName evidence="1">N6-L-threonylcarbamoyladenine synthase</fullName>
        <shortName evidence="1">t(6)A synthase</shortName>
    </alternativeName>
    <alternativeName>
        <fullName evidence="1">t(6)A37 threonylcarbamoyladenosine biosynthesis protein TsaD</fullName>
    </alternativeName>
    <alternativeName>
        <fullName evidence="1">tRNA threonylcarbamoyladenosine biosynthesis protein TsaD</fullName>
    </alternativeName>
</protein>